<evidence type="ECO:0000255" key="1">
    <source>
        <dbReference type="HAMAP-Rule" id="MF_01345"/>
    </source>
</evidence>
<evidence type="ECO:0000305" key="2"/>
<proteinExistence type="inferred from homology"/>
<keyword id="KW-1185">Reference proteome</keyword>
<keyword id="KW-0687">Ribonucleoprotein</keyword>
<keyword id="KW-0689">Ribosomal protein</keyword>
<keyword id="KW-0694">RNA-binding</keyword>
<keyword id="KW-0699">rRNA-binding</keyword>
<reference key="1">
    <citation type="journal article" date="2006" name="Proc. Natl. Acad. Sci. U.S.A.">
        <title>Comparative genomics of the lactic acid bacteria.</title>
        <authorList>
            <person name="Makarova K.S."/>
            <person name="Slesarev A."/>
            <person name="Wolf Y.I."/>
            <person name="Sorokin A."/>
            <person name="Mirkin B."/>
            <person name="Koonin E.V."/>
            <person name="Pavlov A."/>
            <person name="Pavlova N."/>
            <person name="Karamychev V."/>
            <person name="Polouchine N."/>
            <person name="Shakhova V."/>
            <person name="Grigoriev I."/>
            <person name="Lou Y."/>
            <person name="Rohksar D."/>
            <person name="Lucas S."/>
            <person name="Huang K."/>
            <person name="Goodstein D.M."/>
            <person name="Hawkins T."/>
            <person name="Plengvidhya V."/>
            <person name="Welker D."/>
            <person name="Hughes J."/>
            <person name="Goh Y."/>
            <person name="Benson A."/>
            <person name="Baldwin K."/>
            <person name="Lee J.-H."/>
            <person name="Diaz-Muniz I."/>
            <person name="Dosti B."/>
            <person name="Smeianov V."/>
            <person name="Wechter W."/>
            <person name="Barabote R."/>
            <person name="Lorca G."/>
            <person name="Altermann E."/>
            <person name="Barrangou R."/>
            <person name="Ganesan B."/>
            <person name="Xie Y."/>
            <person name="Rawsthorne H."/>
            <person name="Tamir D."/>
            <person name="Parker C."/>
            <person name="Breidt F."/>
            <person name="Broadbent J.R."/>
            <person name="Hutkins R."/>
            <person name="O'Sullivan D."/>
            <person name="Steele J."/>
            <person name="Unlu G."/>
            <person name="Saier M.H. Jr."/>
            <person name="Klaenhammer T."/>
            <person name="Richardson P."/>
            <person name="Kozyavkin S."/>
            <person name="Weimer B.C."/>
            <person name="Mills D.A."/>
        </authorList>
    </citation>
    <scope>NUCLEOTIDE SEQUENCE [LARGE SCALE GENOMIC DNA]</scope>
    <source>
        <strain>ATCC BAA-331 / PSU-1</strain>
    </source>
</reference>
<accession>Q04G76</accession>
<protein>
    <recommendedName>
        <fullName evidence="1">Small ribosomal subunit protein uS17</fullName>
    </recommendedName>
    <alternativeName>
        <fullName evidence="2">30S ribosomal protein S17</fullName>
    </alternativeName>
</protein>
<name>RS17_OENOB</name>
<gene>
    <name evidence="1" type="primary">rpsQ</name>
    <name type="ordered locus">OEOE_0604</name>
</gene>
<comment type="function">
    <text evidence="1">One of the primary rRNA binding proteins, it binds specifically to the 5'-end of 16S ribosomal RNA.</text>
</comment>
<comment type="subunit">
    <text evidence="1">Part of the 30S ribosomal subunit.</text>
</comment>
<comment type="similarity">
    <text evidence="1">Belongs to the universal ribosomal protein uS17 family.</text>
</comment>
<dbReference type="EMBL" id="CP000411">
    <property type="protein sequence ID" value="ABJ56546.1"/>
    <property type="molecule type" value="Genomic_DNA"/>
</dbReference>
<dbReference type="RefSeq" id="WP_002818464.1">
    <property type="nucleotide sequence ID" value="NC_008528.1"/>
</dbReference>
<dbReference type="SMR" id="Q04G76"/>
<dbReference type="STRING" id="203123.OEOE_0604"/>
<dbReference type="GeneID" id="75065426"/>
<dbReference type="KEGG" id="ooe:OEOE_0604"/>
<dbReference type="eggNOG" id="COG0186">
    <property type="taxonomic scope" value="Bacteria"/>
</dbReference>
<dbReference type="HOGENOM" id="CLU_073626_1_0_9"/>
<dbReference type="Proteomes" id="UP000000774">
    <property type="component" value="Chromosome"/>
</dbReference>
<dbReference type="GO" id="GO:0022627">
    <property type="term" value="C:cytosolic small ribosomal subunit"/>
    <property type="evidence" value="ECO:0007669"/>
    <property type="project" value="TreeGrafter"/>
</dbReference>
<dbReference type="GO" id="GO:0019843">
    <property type="term" value="F:rRNA binding"/>
    <property type="evidence" value="ECO:0007669"/>
    <property type="project" value="UniProtKB-UniRule"/>
</dbReference>
<dbReference type="GO" id="GO:0003735">
    <property type="term" value="F:structural constituent of ribosome"/>
    <property type="evidence" value="ECO:0007669"/>
    <property type="project" value="InterPro"/>
</dbReference>
<dbReference type="GO" id="GO:0006412">
    <property type="term" value="P:translation"/>
    <property type="evidence" value="ECO:0007669"/>
    <property type="project" value="UniProtKB-UniRule"/>
</dbReference>
<dbReference type="CDD" id="cd00364">
    <property type="entry name" value="Ribosomal_uS17"/>
    <property type="match status" value="1"/>
</dbReference>
<dbReference type="FunFam" id="2.40.50.140:FF:000026">
    <property type="entry name" value="30S ribosomal protein S17"/>
    <property type="match status" value="1"/>
</dbReference>
<dbReference type="Gene3D" id="2.40.50.140">
    <property type="entry name" value="Nucleic acid-binding proteins"/>
    <property type="match status" value="1"/>
</dbReference>
<dbReference type="HAMAP" id="MF_01345_B">
    <property type="entry name" value="Ribosomal_uS17_B"/>
    <property type="match status" value="1"/>
</dbReference>
<dbReference type="InterPro" id="IPR012340">
    <property type="entry name" value="NA-bd_OB-fold"/>
</dbReference>
<dbReference type="InterPro" id="IPR000266">
    <property type="entry name" value="Ribosomal_uS17"/>
</dbReference>
<dbReference type="InterPro" id="IPR019984">
    <property type="entry name" value="Ribosomal_uS17_bact/chlr"/>
</dbReference>
<dbReference type="NCBIfam" id="NF004123">
    <property type="entry name" value="PRK05610.1"/>
    <property type="match status" value="1"/>
</dbReference>
<dbReference type="NCBIfam" id="TIGR03635">
    <property type="entry name" value="uS17_bact"/>
    <property type="match status" value="1"/>
</dbReference>
<dbReference type="PANTHER" id="PTHR10744">
    <property type="entry name" value="40S RIBOSOMAL PROTEIN S11 FAMILY MEMBER"/>
    <property type="match status" value="1"/>
</dbReference>
<dbReference type="PANTHER" id="PTHR10744:SF1">
    <property type="entry name" value="SMALL RIBOSOMAL SUBUNIT PROTEIN US17M"/>
    <property type="match status" value="1"/>
</dbReference>
<dbReference type="Pfam" id="PF00366">
    <property type="entry name" value="Ribosomal_S17"/>
    <property type="match status" value="1"/>
</dbReference>
<dbReference type="PRINTS" id="PR00973">
    <property type="entry name" value="RIBOSOMALS17"/>
</dbReference>
<dbReference type="SUPFAM" id="SSF50249">
    <property type="entry name" value="Nucleic acid-binding proteins"/>
    <property type="match status" value="1"/>
</dbReference>
<organism>
    <name type="scientific">Oenococcus oeni (strain ATCC BAA-331 / PSU-1)</name>
    <dbReference type="NCBI Taxonomy" id="203123"/>
    <lineage>
        <taxon>Bacteria</taxon>
        <taxon>Bacillati</taxon>
        <taxon>Bacillota</taxon>
        <taxon>Bacilli</taxon>
        <taxon>Lactobacillales</taxon>
        <taxon>Lactobacillaceae</taxon>
        <taxon>Oenococcus</taxon>
    </lineage>
</organism>
<sequence length="88" mass="10282">MSEERNTRKVYRGRVVSDKMDKTITVAVETYKNHPVYGKRVNYAKKFKAHDENNDAKLNDVVEIMETRPLSATKRFRLVRVVEKAVVL</sequence>
<feature type="chain" id="PRO_1000054986" description="Small ribosomal subunit protein uS17">
    <location>
        <begin position="1"/>
        <end position="88"/>
    </location>
</feature>